<name>LICH_BACSU</name>
<proteinExistence type="evidence at transcript level"/>
<protein>
    <recommendedName>
        <fullName>Probable 6-phospho-beta-glucosidase</fullName>
        <ecNumber>3.2.1.86</ecNumber>
    </recommendedName>
</protein>
<sequence length="442" mass="48711">MTKGLKIVTIGGGSSYTPELVEGFIKRYDELPVRELWLVDIPEGEEKLNIVGTLAKRMVEKAGVPIDIHLTLDRRKALKDADFVTTQFRVGLLQARAKDERIPLKYGVIGQETNGPGGLFKGLRTIPVILEIAKDIEELCPNAWLVNFTNPAGMVTEALLRYSNLKKVVGLCNVPIGIKMGVAKALDVDVDRVEVQFAGLNHMVFGLDVFLDGVSVKEQVIEAMGDPKNAMTMKNISGAEWEPDFLKALNVIPCGYHRYYFKTKEMLEHELEASQTEGTRAEVVQKVEKELFELYKDPNLAIKPPQLEKRGGAYYSDAACNLISSIYNDKHDIQPVNTINNGAIASIPDDSAVEVNCVMTKTGPKPIAVGDLPVSVRGLVQQIKSFERVAAEAAVTGDYQTALLAMTINPLVPSDTVAKQILDEMLEAHKAYLPQFFNKIEA</sequence>
<dbReference type="EC" id="3.2.1.86"/>
<dbReference type="EMBL" id="Z49992">
    <property type="protein sequence ID" value="CAA90288.1"/>
    <property type="molecule type" value="Genomic_DNA"/>
</dbReference>
<dbReference type="EMBL" id="AL009126">
    <property type="protein sequence ID" value="CAB15882.1"/>
    <property type="molecule type" value="Genomic_DNA"/>
</dbReference>
<dbReference type="EMBL" id="D83026">
    <property type="protein sequence ID" value="BAA11746.1"/>
    <property type="molecule type" value="Genomic_DNA"/>
</dbReference>
<dbReference type="PIR" id="S57762">
    <property type="entry name" value="S57762"/>
</dbReference>
<dbReference type="RefSeq" id="NP_391735.1">
    <property type="nucleotide sequence ID" value="NC_000964.3"/>
</dbReference>
<dbReference type="RefSeq" id="WP_003244285.1">
    <property type="nucleotide sequence ID" value="NZ_OZ025638.1"/>
</dbReference>
<dbReference type="SMR" id="P46320"/>
<dbReference type="FunCoup" id="P46320">
    <property type="interactions" value="125"/>
</dbReference>
<dbReference type="STRING" id="224308.BSU38560"/>
<dbReference type="CAZy" id="GH4">
    <property type="family name" value="Glycoside Hydrolase Family 4"/>
</dbReference>
<dbReference type="jPOST" id="P46320"/>
<dbReference type="PaxDb" id="224308-BSU38560"/>
<dbReference type="EnsemblBacteria" id="CAB15882">
    <property type="protein sequence ID" value="CAB15882"/>
    <property type="gene ID" value="BSU_38560"/>
</dbReference>
<dbReference type="GeneID" id="937373"/>
<dbReference type="KEGG" id="bsu:BSU38560"/>
<dbReference type="PATRIC" id="fig|224308.179.peg.4175"/>
<dbReference type="eggNOG" id="COG1486">
    <property type="taxonomic scope" value="Bacteria"/>
</dbReference>
<dbReference type="InParanoid" id="P46320"/>
<dbReference type="OrthoDB" id="9808275at2"/>
<dbReference type="PhylomeDB" id="P46320"/>
<dbReference type="BioCyc" id="BSUB:BSU38560-MONOMER"/>
<dbReference type="Proteomes" id="UP000001570">
    <property type="component" value="Chromosome"/>
</dbReference>
<dbReference type="GO" id="GO:0005829">
    <property type="term" value="C:cytosol"/>
    <property type="evidence" value="ECO:0000318"/>
    <property type="project" value="GO_Central"/>
</dbReference>
<dbReference type="GO" id="GO:0008706">
    <property type="term" value="F:6-phospho-beta-glucosidase activity"/>
    <property type="evidence" value="ECO:0007669"/>
    <property type="project" value="UniProtKB-EC"/>
</dbReference>
<dbReference type="GO" id="GO:0004553">
    <property type="term" value="F:hydrolase activity, hydrolyzing O-glycosyl compounds"/>
    <property type="evidence" value="ECO:0000318"/>
    <property type="project" value="GO_Central"/>
</dbReference>
<dbReference type="GO" id="GO:0046872">
    <property type="term" value="F:metal ion binding"/>
    <property type="evidence" value="ECO:0007669"/>
    <property type="project" value="UniProtKB-KW"/>
</dbReference>
<dbReference type="GO" id="GO:0016616">
    <property type="term" value="F:oxidoreductase activity, acting on the CH-OH group of donors, NAD or NADP as acceptor"/>
    <property type="evidence" value="ECO:0007669"/>
    <property type="project" value="InterPro"/>
</dbReference>
<dbReference type="GO" id="GO:0005975">
    <property type="term" value="P:carbohydrate metabolic process"/>
    <property type="evidence" value="ECO:0007669"/>
    <property type="project" value="InterPro"/>
</dbReference>
<dbReference type="CDD" id="cd05296">
    <property type="entry name" value="GH4_P_beta_glucosidase"/>
    <property type="match status" value="1"/>
</dbReference>
<dbReference type="FunFam" id="3.40.50.720:FF:000163">
    <property type="entry name" value="6-phospho-beta-glucosidase"/>
    <property type="match status" value="1"/>
</dbReference>
<dbReference type="FunFam" id="3.90.110.10:FF:000008">
    <property type="entry name" value="6-phospho-beta-glucosidase"/>
    <property type="match status" value="1"/>
</dbReference>
<dbReference type="Gene3D" id="3.90.110.10">
    <property type="entry name" value="Lactate dehydrogenase/glycoside hydrolase, family 4, C-terminal"/>
    <property type="match status" value="1"/>
</dbReference>
<dbReference type="Gene3D" id="3.40.50.720">
    <property type="entry name" value="NAD(P)-binding Rossmann-like Domain"/>
    <property type="match status" value="1"/>
</dbReference>
<dbReference type="InterPro" id="IPR019802">
    <property type="entry name" value="GlycHydrolase_4_CS"/>
</dbReference>
<dbReference type="InterPro" id="IPR001088">
    <property type="entry name" value="Glyco_hydro_4"/>
</dbReference>
<dbReference type="InterPro" id="IPR022616">
    <property type="entry name" value="Glyco_hydro_4_C"/>
</dbReference>
<dbReference type="InterPro" id="IPR015955">
    <property type="entry name" value="Lactate_DH/Glyco_Ohase_4_C"/>
</dbReference>
<dbReference type="InterPro" id="IPR036291">
    <property type="entry name" value="NAD(P)-bd_dom_sf"/>
</dbReference>
<dbReference type="PANTHER" id="PTHR32092:SF5">
    <property type="entry name" value="6-PHOSPHO-BETA-GLUCOSIDASE"/>
    <property type="match status" value="1"/>
</dbReference>
<dbReference type="PANTHER" id="PTHR32092">
    <property type="entry name" value="6-PHOSPHO-BETA-GLUCOSIDASE-RELATED"/>
    <property type="match status" value="1"/>
</dbReference>
<dbReference type="Pfam" id="PF02056">
    <property type="entry name" value="Glyco_hydro_4"/>
    <property type="match status" value="1"/>
</dbReference>
<dbReference type="Pfam" id="PF11975">
    <property type="entry name" value="Glyco_hydro_4C"/>
    <property type="match status" value="1"/>
</dbReference>
<dbReference type="PRINTS" id="PR00732">
    <property type="entry name" value="GLHYDRLASE4"/>
</dbReference>
<dbReference type="SUPFAM" id="SSF56327">
    <property type="entry name" value="LDH C-terminal domain-like"/>
    <property type="match status" value="1"/>
</dbReference>
<dbReference type="SUPFAM" id="SSF51735">
    <property type="entry name" value="NAD(P)-binding Rossmann-fold domains"/>
    <property type="match status" value="1"/>
</dbReference>
<dbReference type="PROSITE" id="PS01324">
    <property type="entry name" value="GLYCOSYL_HYDROL_F4"/>
    <property type="match status" value="1"/>
</dbReference>
<accession>P46320</accession>
<keyword id="KW-0119">Carbohydrate metabolism</keyword>
<keyword id="KW-0326">Glycosidase</keyword>
<keyword id="KW-0378">Hydrolase</keyword>
<keyword id="KW-0464">Manganese</keyword>
<keyword id="KW-0479">Metal-binding</keyword>
<keyword id="KW-0520">NAD</keyword>
<keyword id="KW-1185">Reference proteome</keyword>
<organism>
    <name type="scientific">Bacillus subtilis (strain 168)</name>
    <dbReference type="NCBI Taxonomy" id="224308"/>
    <lineage>
        <taxon>Bacteria</taxon>
        <taxon>Bacillati</taxon>
        <taxon>Bacillota</taxon>
        <taxon>Bacilli</taxon>
        <taxon>Bacillales</taxon>
        <taxon>Bacillaceae</taxon>
        <taxon>Bacillus</taxon>
    </lineage>
</organism>
<feature type="chain" id="PRO_0000169861" description="Probable 6-phospho-beta-glucosidase">
    <location>
        <begin position="1"/>
        <end position="442"/>
    </location>
</feature>
<feature type="active site" description="Proton acceptor" evidence="1">
    <location>
        <position position="256"/>
    </location>
</feature>
<feature type="binding site" evidence="1">
    <location>
        <begin position="5"/>
        <end position="73"/>
    </location>
    <ligand>
        <name>NAD(+)</name>
        <dbReference type="ChEBI" id="CHEBI:57540"/>
    </ligand>
</feature>
<feature type="binding site" evidence="1">
    <location>
        <position position="96"/>
    </location>
    <ligand>
        <name>substrate</name>
    </ligand>
</feature>
<feature type="binding site" evidence="1">
    <location>
        <position position="150"/>
    </location>
    <ligand>
        <name>substrate</name>
    </ligand>
</feature>
<feature type="binding site" evidence="1">
    <location>
        <position position="172"/>
    </location>
    <ligand>
        <name>Mn(2+)</name>
        <dbReference type="ChEBI" id="CHEBI:29035"/>
    </ligand>
</feature>
<feature type="binding site" evidence="1">
    <location>
        <position position="202"/>
    </location>
    <ligand>
        <name>Mn(2+)</name>
        <dbReference type="ChEBI" id="CHEBI:29035"/>
    </ligand>
</feature>
<feature type="site" description="Increases basicity of active site Tyr" evidence="1">
    <location>
        <position position="112"/>
    </location>
</feature>
<comment type="function">
    <text evidence="2">Hydrolyzes phospho-beta-glucosides.</text>
</comment>
<comment type="catalytic activity">
    <reaction>
        <text>6-phospho-beta-D-glucosyl-(1-&gt;4)-D-glucose + H2O = D-glucose 6-phosphate + D-glucose</text>
        <dbReference type="Rhea" id="RHEA:10772"/>
        <dbReference type="ChEBI" id="CHEBI:4167"/>
        <dbReference type="ChEBI" id="CHEBI:15377"/>
        <dbReference type="ChEBI" id="CHEBI:58312"/>
        <dbReference type="ChEBI" id="CHEBI:61548"/>
        <dbReference type="EC" id="3.2.1.86"/>
    </reaction>
</comment>
<comment type="cofactor">
    <cofactor evidence="1">
        <name>NAD(+)</name>
        <dbReference type="ChEBI" id="CHEBI:57540"/>
    </cofactor>
</comment>
<comment type="cofactor">
    <cofactor evidence="1">
        <name>a divalent metal cation</name>
        <dbReference type="ChEBI" id="CHEBI:60240"/>
    </cofactor>
</comment>
<comment type="induction">
    <text>Induced by lichenan, lichenan hydrolysate and cellobiose. Subject to carbon catabolite repression.</text>
</comment>
<comment type="similarity">
    <text evidence="2">Belongs to the glycosyl hydrolase 4 family.</text>
</comment>
<reference key="1">
    <citation type="journal article" date="1997" name="J. Bacteriol.">
        <title>Identification and characterization of a new beta-glucoside utilization system in Bacillus subtilis.</title>
        <authorList>
            <person name="Tobisch S."/>
            <person name="Glaser P."/>
            <person name="Krueger S."/>
            <person name="Hecker M."/>
        </authorList>
    </citation>
    <scope>NUCLEOTIDE SEQUENCE [GENOMIC DNA]</scope>
    <source>
        <strain>168</strain>
    </source>
</reference>
<reference key="2">
    <citation type="journal article" date="1997" name="Nature">
        <title>The complete genome sequence of the Gram-positive bacterium Bacillus subtilis.</title>
        <authorList>
            <person name="Kunst F."/>
            <person name="Ogasawara N."/>
            <person name="Moszer I."/>
            <person name="Albertini A.M."/>
            <person name="Alloni G."/>
            <person name="Azevedo V."/>
            <person name="Bertero M.G."/>
            <person name="Bessieres P."/>
            <person name="Bolotin A."/>
            <person name="Borchert S."/>
            <person name="Borriss R."/>
            <person name="Boursier L."/>
            <person name="Brans A."/>
            <person name="Braun M."/>
            <person name="Brignell S.C."/>
            <person name="Bron S."/>
            <person name="Brouillet S."/>
            <person name="Bruschi C.V."/>
            <person name="Caldwell B."/>
            <person name="Capuano V."/>
            <person name="Carter N.M."/>
            <person name="Choi S.-K."/>
            <person name="Codani J.-J."/>
            <person name="Connerton I.F."/>
            <person name="Cummings N.J."/>
            <person name="Daniel R.A."/>
            <person name="Denizot F."/>
            <person name="Devine K.M."/>
            <person name="Duesterhoeft A."/>
            <person name="Ehrlich S.D."/>
            <person name="Emmerson P.T."/>
            <person name="Entian K.-D."/>
            <person name="Errington J."/>
            <person name="Fabret C."/>
            <person name="Ferrari E."/>
            <person name="Foulger D."/>
            <person name="Fritz C."/>
            <person name="Fujita M."/>
            <person name="Fujita Y."/>
            <person name="Fuma S."/>
            <person name="Galizzi A."/>
            <person name="Galleron N."/>
            <person name="Ghim S.-Y."/>
            <person name="Glaser P."/>
            <person name="Goffeau A."/>
            <person name="Golightly E.J."/>
            <person name="Grandi G."/>
            <person name="Guiseppi G."/>
            <person name="Guy B.J."/>
            <person name="Haga K."/>
            <person name="Haiech J."/>
            <person name="Harwood C.R."/>
            <person name="Henaut A."/>
            <person name="Hilbert H."/>
            <person name="Holsappel S."/>
            <person name="Hosono S."/>
            <person name="Hullo M.-F."/>
            <person name="Itaya M."/>
            <person name="Jones L.-M."/>
            <person name="Joris B."/>
            <person name="Karamata D."/>
            <person name="Kasahara Y."/>
            <person name="Klaerr-Blanchard M."/>
            <person name="Klein C."/>
            <person name="Kobayashi Y."/>
            <person name="Koetter P."/>
            <person name="Koningstein G."/>
            <person name="Krogh S."/>
            <person name="Kumano M."/>
            <person name="Kurita K."/>
            <person name="Lapidus A."/>
            <person name="Lardinois S."/>
            <person name="Lauber J."/>
            <person name="Lazarevic V."/>
            <person name="Lee S.-M."/>
            <person name="Levine A."/>
            <person name="Liu H."/>
            <person name="Masuda S."/>
            <person name="Mauel C."/>
            <person name="Medigue C."/>
            <person name="Medina N."/>
            <person name="Mellado R.P."/>
            <person name="Mizuno M."/>
            <person name="Moestl D."/>
            <person name="Nakai S."/>
            <person name="Noback M."/>
            <person name="Noone D."/>
            <person name="O'Reilly M."/>
            <person name="Ogawa K."/>
            <person name="Ogiwara A."/>
            <person name="Oudega B."/>
            <person name="Park S.-H."/>
            <person name="Parro V."/>
            <person name="Pohl T.M."/>
            <person name="Portetelle D."/>
            <person name="Porwollik S."/>
            <person name="Prescott A.M."/>
            <person name="Presecan E."/>
            <person name="Pujic P."/>
            <person name="Purnelle B."/>
            <person name="Rapoport G."/>
            <person name="Rey M."/>
            <person name="Reynolds S."/>
            <person name="Rieger M."/>
            <person name="Rivolta C."/>
            <person name="Rocha E."/>
            <person name="Roche B."/>
            <person name="Rose M."/>
            <person name="Sadaie Y."/>
            <person name="Sato T."/>
            <person name="Scanlan E."/>
            <person name="Schleich S."/>
            <person name="Schroeter R."/>
            <person name="Scoffone F."/>
            <person name="Sekiguchi J."/>
            <person name="Sekowska A."/>
            <person name="Seror S.J."/>
            <person name="Serror P."/>
            <person name="Shin B.-S."/>
            <person name="Soldo B."/>
            <person name="Sorokin A."/>
            <person name="Tacconi E."/>
            <person name="Takagi T."/>
            <person name="Takahashi H."/>
            <person name="Takemaru K."/>
            <person name="Takeuchi M."/>
            <person name="Tamakoshi A."/>
            <person name="Tanaka T."/>
            <person name="Terpstra P."/>
            <person name="Tognoni A."/>
            <person name="Tosato V."/>
            <person name="Uchiyama S."/>
            <person name="Vandenbol M."/>
            <person name="Vannier F."/>
            <person name="Vassarotti A."/>
            <person name="Viari A."/>
            <person name="Wambutt R."/>
            <person name="Wedler E."/>
            <person name="Wedler H."/>
            <person name="Weitzenegger T."/>
            <person name="Winters P."/>
            <person name="Wipat A."/>
            <person name="Yamamoto H."/>
            <person name="Yamane K."/>
            <person name="Yasumoto K."/>
            <person name="Yata K."/>
            <person name="Yoshida K."/>
            <person name="Yoshikawa H.-F."/>
            <person name="Zumstein E."/>
            <person name="Yoshikawa H."/>
            <person name="Danchin A."/>
        </authorList>
    </citation>
    <scope>NUCLEOTIDE SEQUENCE [LARGE SCALE GENOMIC DNA]</scope>
    <source>
        <strain>168</strain>
    </source>
</reference>
<reference key="3">
    <citation type="journal article" date="1996" name="Microbiology">
        <title>Sequencing of a 65 kb region of the Bacillus subtilis genome containing the lic and cel loci, and creation of a 177 kb contig covering the gnt-sacXY region.</title>
        <authorList>
            <person name="Yoshida K."/>
            <person name="Shindo K."/>
            <person name="Sano H."/>
            <person name="Seki S."/>
            <person name="Fujimura M."/>
            <person name="Yanai N."/>
            <person name="Miwa Y."/>
            <person name="Fujita Y."/>
        </authorList>
    </citation>
    <scope>NUCLEOTIDE SEQUENCE [GENOMIC DNA] OF 1-305</scope>
    <source>
        <strain>168 / BGSC1A1</strain>
    </source>
</reference>
<gene>
    <name type="primary">licH</name>
    <name type="synonym">celD</name>
    <name type="synonym">celF</name>
    <name type="ordered locus">BSU38560</name>
</gene>
<evidence type="ECO:0000250" key="1"/>
<evidence type="ECO:0000305" key="2"/>